<sequence>MGSLQTPTNLSNKSCLCVSGRVVKGLRVERQVGLGFSWLLKGRRNRKVQSLCVTSSVSDGSSIAENKNVSEGLLLGAERDGSGSVVGFQLIPHSVAGDATMVESHDIVANDRDDLSEDTEEMEETPIKLTFNIIFVTAEAAPYSKTGGLGDVCGSLPMALAARGHRVMVVSPRYLNGGPSDEKYANAVDLDVRATVHCFGDAQEVAFYHEYRAGVDWVFVDHSSYCRPGTPYGDIYGAFGDNQFRFTLLSHAACEAPLVLPLGGFTYGEKCLFLANDWHAALVPLLLAAKYRPYGVYKDARSIVAIHNIAHQGVEPAVTYNNLGLPPQWYGAVEWIFPTWARAHALDTGETVNVLKGAIAVADRILTVSQGYSWEITTPEGGYGLHELLSSRQSVLNGITNGIDVNDWNPSTDEHIASHYSINDLSGKVQCKTDLQKELGLPIRPDCPLIGFIGRLDYQKGVDIILSAIPELMQNDVQVVMLGSGEKQYEDWMRHTENLFKDKFRAWVGFNVPVSHRITAGCDILLMPSRFEPCGLNQLYAMRYGTIPIVHSTGGLRDTVKDFNPYAQEGIGEGTGWTFSPLTSEKLLDTLKLAIGTYTEHKSSWEGLMRRGMGRDYSWENAAIQYEQVFTWAFIDPPYVR</sequence>
<reference key="1">
    <citation type="journal article" date="1999" name="Planta">
        <title>Cloning and functional analysis of a cDNA encoding a starch synthase from potato (Solanum tuberosum L.) that is predominantly expressed in leaf tissue.</title>
        <authorList>
            <person name="Kossmann J."/>
            <person name="Abel G.J.W."/>
            <person name="Springer F."/>
            <person name="Lloyd J.R."/>
            <person name="Willmitzer L."/>
        </authorList>
    </citation>
    <scope>NUCLEOTIDE SEQUENCE [MRNA]</scope>
    <source>
        <strain>cv. Desiree</strain>
        <tissue>Leaf</tissue>
    </source>
</reference>
<proteinExistence type="evidence at transcript level"/>
<comment type="function">
    <text>Plays a minor role in starch synthesis in storage organs (tubers), but may contribute to the deposition of transient starch in chloroplasts of leaves.</text>
</comment>
<comment type="catalytic activity">
    <reaction>
        <text>[(1-&gt;4)-alpha-D-glucosyl](n) + ADP-alpha-D-glucose = [(1-&gt;4)-alpha-D-glucosyl](n+1) + ADP + H(+)</text>
        <dbReference type="Rhea" id="RHEA:18189"/>
        <dbReference type="Rhea" id="RHEA-COMP:9584"/>
        <dbReference type="Rhea" id="RHEA-COMP:9587"/>
        <dbReference type="ChEBI" id="CHEBI:15378"/>
        <dbReference type="ChEBI" id="CHEBI:15444"/>
        <dbReference type="ChEBI" id="CHEBI:57498"/>
        <dbReference type="ChEBI" id="CHEBI:456216"/>
        <dbReference type="EC" id="2.4.1.21"/>
    </reaction>
</comment>
<comment type="pathway">
    <text>Glycan biosynthesis; starch biosynthesis.</text>
</comment>
<comment type="subcellular location">
    <subcellularLocation>
        <location>Plastid</location>
        <location>Chloroplast</location>
    </subcellularLocation>
    <subcellularLocation>
        <location>Plastid</location>
        <location>Amyloplast</location>
    </subcellularLocation>
    <text>Amyloplast or chloroplast, soluble.</text>
</comment>
<comment type="tissue specificity">
    <text>High expression in leaves and very low in tubers.</text>
</comment>
<comment type="induction">
    <text>Constant expression in light and darkness.</text>
</comment>
<comment type="similarity">
    <text evidence="3">Belongs to the glycosyltransferase 1 family. Bacterial/plant glycogen synthase subfamily.</text>
</comment>
<keyword id="KW-0035">Amyloplast</keyword>
<keyword id="KW-0150">Chloroplast</keyword>
<keyword id="KW-0328">Glycosyltransferase</keyword>
<keyword id="KW-0934">Plastid</keyword>
<keyword id="KW-1185">Reference proteome</keyword>
<keyword id="KW-0750">Starch biosynthesis</keyword>
<keyword id="KW-0808">Transferase</keyword>
<keyword id="KW-0809">Transit peptide</keyword>
<protein>
    <recommendedName>
        <fullName>Soluble starch synthase 1, chloroplastic/amyloplastic</fullName>
        <ecNumber>2.4.1.21</ecNumber>
    </recommendedName>
    <alternativeName>
        <fullName>Soluble starch synthase I</fullName>
        <shortName>SS I</shortName>
    </alternativeName>
</protein>
<evidence type="ECO:0000250" key="1"/>
<evidence type="ECO:0000255" key="2"/>
<evidence type="ECO:0000305" key="3"/>
<name>SSY1_SOLTU</name>
<organism>
    <name type="scientific">Solanum tuberosum</name>
    <name type="common">Potato</name>
    <dbReference type="NCBI Taxonomy" id="4113"/>
    <lineage>
        <taxon>Eukaryota</taxon>
        <taxon>Viridiplantae</taxon>
        <taxon>Streptophyta</taxon>
        <taxon>Embryophyta</taxon>
        <taxon>Tracheophyta</taxon>
        <taxon>Spermatophyta</taxon>
        <taxon>Magnoliopsida</taxon>
        <taxon>eudicotyledons</taxon>
        <taxon>Gunneridae</taxon>
        <taxon>Pentapetalae</taxon>
        <taxon>asterids</taxon>
        <taxon>lamiids</taxon>
        <taxon>Solanales</taxon>
        <taxon>Solanaceae</taxon>
        <taxon>Solanoideae</taxon>
        <taxon>Solaneae</taxon>
        <taxon>Solanum</taxon>
    </lineage>
</organism>
<feature type="transit peptide" description="Chloroplast" evidence="2">
    <location>
        <begin position="1"/>
        <end status="unknown"/>
    </location>
</feature>
<feature type="chain" id="PRO_0000011142" description="Soluble starch synthase 1, chloroplastic/amyloplastic">
    <location>
        <begin status="unknown"/>
        <end position="641"/>
    </location>
</feature>
<feature type="binding site" evidence="1">
    <location>
        <position position="145"/>
    </location>
    <ligand>
        <name>ADP-alpha-D-glucose</name>
        <dbReference type="ChEBI" id="CHEBI:57498"/>
    </ligand>
</feature>
<accession>P93568</accession>
<dbReference type="EC" id="2.4.1.21"/>
<dbReference type="EMBL" id="Y10416">
    <property type="protein sequence ID" value="CAA71442.1"/>
    <property type="molecule type" value="mRNA"/>
</dbReference>
<dbReference type="PIR" id="T07668">
    <property type="entry name" value="T07668"/>
</dbReference>
<dbReference type="RefSeq" id="NP_001275074.1">
    <property type="nucleotide sequence ID" value="NM_001288145.1"/>
</dbReference>
<dbReference type="SMR" id="P93568"/>
<dbReference type="FunCoup" id="P93568">
    <property type="interactions" value="855"/>
</dbReference>
<dbReference type="STRING" id="4113.P93568"/>
<dbReference type="CAZy" id="GT5">
    <property type="family name" value="Glycosyltransferase Family 5"/>
</dbReference>
<dbReference type="PaxDb" id="4113-PGSC0003DMT400047731"/>
<dbReference type="GeneID" id="102600045"/>
<dbReference type="KEGG" id="sot:102600045"/>
<dbReference type="eggNOG" id="ENOG502QTWM">
    <property type="taxonomic scope" value="Eukaryota"/>
</dbReference>
<dbReference type="InParanoid" id="P93568"/>
<dbReference type="OrthoDB" id="512920at2759"/>
<dbReference type="BioCyc" id="MetaCyc:MONOMER-1882"/>
<dbReference type="UniPathway" id="UPA00152"/>
<dbReference type="Proteomes" id="UP000011115">
    <property type="component" value="Unassembled WGS sequence"/>
</dbReference>
<dbReference type="ExpressionAtlas" id="P93568">
    <property type="expression patterns" value="baseline"/>
</dbReference>
<dbReference type="GO" id="GO:0009501">
    <property type="term" value="C:amyloplast"/>
    <property type="evidence" value="ECO:0007669"/>
    <property type="project" value="UniProtKB-SubCell"/>
</dbReference>
<dbReference type="GO" id="GO:0009507">
    <property type="term" value="C:chloroplast"/>
    <property type="evidence" value="ECO:0000318"/>
    <property type="project" value="GO_Central"/>
</dbReference>
<dbReference type="GO" id="GO:0009011">
    <property type="term" value="F:alpha-1,4-glucan glucosyltransferase (ADP-glucose donor) activity"/>
    <property type="evidence" value="ECO:0007669"/>
    <property type="project" value="UniProtKB-EC"/>
</dbReference>
<dbReference type="GO" id="GO:0004373">
    <property type="term" value="F:alpha-1,4-glucan glucosyltransferase (UDP-glucose donor) activity"/>
    <property type="evidence" value="ECO:0007669"/>
    <property type="project" value="InterPro"/>
</dbReference>
<dbReference type="GO" id="GO:0019252">
    <property type="term" value="P:starch biosynthetic process"/>
    <property type="evidence" value="ECO:0007669"/>
    <property type="project" value="UniProtKB-UniPathway"/>
</dbReference>
<dbReference type="CDD" id="cd03791">
    <property type="entry name" value="GT5_Glycogen_synthase_DULL1-like"/>
    <property type="match status" value="1"/>
</dbReference>
<dbReference type="FunFam" id="3.40.50.2000:FF:000048">
    <property type="entry name" value="Starch synthase, chloroplastic/amyloplastic"/>
    <property type="match status" value="1"/>
</dbReference>
<dbReference type="Gene3D" id="3.40.50.2000">
    <property type="entry name" value="Glycogen Phosphorylase B"/>
    <property type="match status" value="2"/>
</dbReference>
<dbReference type="HAMAP" id="MF_00484">
    <property type="entry name" value="Glycogen_synth"/>
    <property type="match status" value="1"/>
</dbReference>
<dbReference type="InterPro" id="IPR001296">
    <property type="entry name" value="Glyco_trans_1"/>
</dbReference>
<dbReference type="InterPro" id="IPR011835">
    <property type="entry name" value="GS/SS"/>
</dbReference>
<dbReference type="InterPro" id="IPR013534">
    <property type="entry name" value="Starch_synth_cat_dom"/>
</dbReference>
<dbReference type="NCBIfam" id="TIGR02095">
    <property type="entry name" value="glgA"/>
    <property type="match status" value="1"/>
</dbReference>
<dbReference type="PANTHER" id="PTHR45825:SF11">
    <property type="entry name" value="ALPHA AMYLASE DOMAIN-CONTAINING PROTEIN"/>
    <property type="match status" value="1"/>
</dbReference>
<dbReference type="PANTHER" id="PTHR45825">
    <property type="entry name" value="GRANULE-BOUND STARCH SYNTHASE 1, CHLOROPLASTIC/AMYLOPLASTIC"/>
    <property type="match status" value="1"/>
</dbReference>
<dbReference type="Pfam" id="PF08323">
    <property type="entry name" value="Glyco_transf_5"/>
    <property type="match status" value="1"/>
</dbReference>
<dbReference type="Pfam" id="PF00534">
    <property type="entry name" value="Glycos_transf_1"/>
    <property type="match status" value="1"/>
</dbReference>
<dbReference type="SUPFAM" id="SSF53756">
    <property type="entry name" value="UDP-Glycosyltransferase/glycogen phosphorylase"/>
    <property type="match status" value="1"/>
</dbReference>